<feature type="chain" id="PRO_0000090540" description="Rhamnulokinase">
    <location>
        <begin position="1"/>
        <end position="482"/>
    </location>
</feature>
<feature type="active site" description="Proton acceptor" evidence="1">
    <location>
        <position position="233"/>
    </location>
</feature>
<feature type="binding site" evidence="1">
    <location>
        <begin position="13"/>
        <end position="17"/>
    </location>
    <ligand>
        <name>ATP</name>
        <dbReference type="ChEBI" id="CHEBI:30616"/>
    </ligand>
</feature>
<feature type="binding site" evidence="1">
    <location>
        <position position="83"/>
    </location>
    <ligand>
        <name>substrate</name>
    </ligand>
</feature>
<feature type="binding site" evidence="1">
    <location>
        <begin position="232"/>
        <end position="234"/>
    </location>
    <ligand>
        <name>substrate</name>
    </ligand>
</feature>
<feature type="binding site" evidence="1">
    <location>
        <position position="255"/>
    </location>
    <ligand>
        <name>ATP</name>
        <dbReference type="ChEBI" id="CHEBI:30616"/>
    </ligand>
</feature>
<feature type="binding site" evidence="1">
    <location>
        <position position="292"/>
    </location>
    <ligand>
        <name>substrate</name>
    </ligand>
</feature>
<feature type="binding site" evidence="1">
    <location>
        <position position="300"/>
    </location>
    <ligand>
        <name>ATP</name>
        <dbReference type="ChEBI" id="CHEBI:30616"/>
    </ligand>
</feature>
<feature type="binding site" evidence="1">
    <location>
        <position position="398"/>
    </location>
    <ligand>
        <name>ATP</name>
        <dbReference type="ChEBI" id="CHEBI:30616"/>
    </ligand>
</feature>
<feature type="disulfide bond" evidence="1">
    <location>
        <begin position="349"/>
        <end position="366"/>
    </location>
</feature>
<feature type="disulfide bond" evidence="1">
    <location>
        <begin position="409"/>
        <end position="413"/>
    </location>
</feature>
<name>RHAB_MANSM</name>
<proteinExistence type="inferred from homology"/>
<organism>
    <name type="scientific">Mannheimia succiniciproducens (strain KCTC 0769BP / MBEL55E)</name>
    <dbReference type="NCBI Taxonomy" id="221988"/>
    <lineage>
        <taxon>Bacteria</taxon>
        <taxon>Pseudomonadati</taxon>
        <taxon>Pseudomonadota</taxon>
        <taxon>Gammaproteobacteria</taxon>
        <taxon>Pasteurellales</taxon>
        <taxon>Pasteurellaceae</taxon>
        <taxon>Basfia</taxon>
    </lineage>
</organism>
<dbReference type="EC" id="2.7.1.5" evidence="1"/>
<dbReference type="EMBL" id="AE016827">
    <property type="protein sequence ID" value="AAU38936.1"/>
    <property type="molecule type" value="Genomic_DNA"/>
</dbReference>
<dbReference type="RefSeq" id="WP_011201474.1">
    <property type="nucleotide sequence ID" value="NC_006300.1"/>
</dbReference>
<dbReference type="SMR" id="Q65Q24"/>
<dbReference type="STRING" id="221988.MS2329"/>
<dbReference type="KEGG" id="msu:MS2329"/>
<dbReference type="eggNOG" id="COG1070">
    <property type="taxonomic scope" value="Bacteria"/>
</dbReference>
<dbReference type="HOGENOM" id="CLU_039395_0_0_6"/>
<dbReference type="OrthoDB" id="9761504at2"/>
<dbReference type="UniPathway" id="UPA00541">
    <property type="reaction ID" value="UER00602"/>
</dbReference>
<dbReference type="Proteomes" id="UP000000607">
    <property type="component" value="Chromosome"/>
</dbReference>
<dbReference type="GO" id="GO:0005829">
    <property type="term" value="C:cytosol"/>
    <property type="evidence" value="ECO:0007669"/>
    <property type="project" value="TreeGrafter"/>
</dbReference>
<dbReference type="GO" id="GO:0005524">
    <property type="term" value="F:ATP binding"/>
    <property type="evidence" value="ECO:0007669"/>
    <property type="project" value="UniProtKB-KW"/>
</dbReference>
<dbReference type="GO" id="GO:0004370">
    <property type="term" value="F:glycerol kinase activity"/>
    <property type="evidence" value="ECO:0007669"/>
    <property type="project" value="TreeGrafter"/>
</dbReference>
<dbReference type="GO" id="GO:0008993">
    <property type="term" value="F:rhamnulokinase activity"/>
    <property type="evidence" value="ECO:0007669"/>
    <property type="project" value="UniProtKB-UniRule"/>
</dbReference>
<dbReference type="GO" id="GO:0006071">
    <property type="term" value="P:glycerol metabolic process"/>
    <property type="evidence" value="ECO:0007669"/>
    <property type="project" value="TreeGrafter"/>
</dbReference>
<dbReference type="GO" id="GO:0019301">
    <property type="term" value="P:rhamnose catabolic process"/>
    <property type="evidence" value="ECO:0007669"/>
    <property type="project" value="UniProtKB-UniRule"/>
</dbReference>
<dbReference type="CDD" id="cd07771">
    <property type="entry name" value="ASKHA_NBD_FGGY_RhaB-like"/>
    <property type="match status" value="1"/>
</dbReference>
<dbReference type="FunFam" id="3.30.420.40:FF:000064">
    <property type="entry name" value="Rhamnulokinase"/>
    <property type="match status" value="1"/>
</dbReference>
<dbReference type="Gene3D" id="3.30.420.40">
    <property type="match status" value="2"/>
</dbReference>
<dbReference type="HAMAP" id="MF_01535">
    <property type="entry name" value="Rhamnulokinase"/>
    <property type="match status" value="1"/>
</dbReference>
<dbReference type="InterPro" id="IPR043129">
    <property type="entry name" value="ATPase_NBD"/>
</dbReference>
<dbReference type="InterPro" id="IPR018484">
    <property type="entry name" value="FGGY_N"/>
</dbReference>
<dbReference type="InterPro" id="IPR013449">
    <property type="entry name" value="Rhamnulokinase"/>
</dbReference>
<dbReference type="NCBIfam" id="NF007925">
    <property type="entry name" value="PRK10640.1"/>
    <property type="match status" value="1"/>
</dbReference>
<dbReference type="NCBIfam" id="TIGR02627">
    <property type="entry name" value="rhamnulo_kin"/>
    <property type="match status" value="1"/>
</dbReference>
<dbReference type="PANTHER" id="PTHR10196:SF93">
    <property type="entry name" value="L-RHAMNULOKINASE"/>
    <property type="match status" value="1"/>
</dbReference>
<dbReference type="PANTHER" id="PTHR10196">
    <property type="entry name" value="SUGAR KINASE"/>
    <property type="match status" value="1"/>
</dbReference>
<dbReference type="Pfam" id="PF00370">
    <property type="entry name" value="FGGY_N"/>
    <property type="match status" value="1"/>
</dbReference>
<dbReference type="SUPFAM" id="SSF53067">
    <property type="entry name" value="Actin-like ATPase domain"/>
    <property type="match status" value="2"/>
</dbReference>
<reference key="1">
    <citation type="journal article" date="2004" name="Nat. Biotechnol.">
        <title>The genome sequence of the capnophilic rumen bacterium Mannheimia succiniciproducens.</title>
        <authorList>
            <person name="Hong S.H."/>
            <person name="Kim J.S."/>
            <person name="Lee S.Y."/>
            <person name="In Y.H."/>
            <person name="Choi S.S."/>
            <person name="Rih J.-K."/>
            <person name="Kim C.H."/>
            <person name="Jeong H."/>
            <person name="Hur C.G."/>
            <person name="Kim J.J."/>
        </authorList>
    </citation>
    <scope>NUCLEOTIDE SEQUENCE [LARGE SCALE GENOMIC DNA]</scope>
    <source>
        <strain>KCTC 0769BP / MBEL55E</strain>
    </source>
</reference>
<protein>
    <recommendedName>
        <fullName evidence="1">Rhamnulokinase</fullName>
        <shortName evidence="1">RhaB</shortName>
        <ecNumber evidence="1">2.7.1.5</ecNumber>
    </recommendedName>
    <alternativeName>
        <fullName evidence="1">ATP:L-rhamnulose phosphotransferase</fullName>
    </alternativeName>
    <alternativeName>
        <fullName evidence="1">L-rhamnulose 1-kinase</fullName>
    </alternativeName>
    <alternativeName>
        <fullName evidence="1">Rhamnulose kinase</fullName>
    </alternativeName>
</protein>
<keyword id="KW-0067">ATP-binding</keyword>
<keyword id="KW-1015">Disulfide bond</keyword>
<keyword id="KW-0418">Kinase</keyword>
<keyword id="KW-0547">Nucleotide-binding</keyword>
<keyword id="KW-0684">Rhamnose metabolism</keyword>
<keyword id="KW-0808">Transferase</keyword>
<evidence type="ECO:0000255" key="1">
    <source>
        <dbReference type="HAMAP-Rule" id="MF_01535"/>
    </source>
</evidence>
<comment type="function">
    <text evidence="1">Involved in the catabolism of L-rhamnose (6-deoxy-L-mannose). Catalyzes the transfer of the gamma-phosphate group from ATP to the 1-hydroxyl group of L-rhamnulose to yield L-rhamnulose 1-phosphate.</text>
</comment>
<comment type="catalytic activity">
    <reaction evidence="1">
        <text>L-rhamnulose + ATP = L-rhamnulose 1-phosphate + ADP + H(+)</text>
        <dbReference type="Rhea" id="RHEA:20117"/>
        <dbReference type="ChEBI" id="CHEBI:15378"/>
        <dbReference type="ChEBI" id="CHEBI:17897"/>
        <dbReference type="ChEBI" id="CHEBI:30616"/>
        <dbReference type="ChEBI" id="CHEBI:58313"/>
        <dbReference type="ChEBI" id="CHEBI:456216"/>
        <dbReference type="EC" id="2.7.1.5"/>
    </reaction>
</comment>
<comment type="cofactor">
    <cofactor evidence="1">
        <name>Mg(2+)</name>
        <dbReference type="ChEBI" id="CHEBI:18420"/>
    </cofactor>
</comment>
<comment type="pathway">
    <text evidence="1">Carbohydrate degradation; L-rhamnose degradation; glycerone phosphate from L-rhamnose: step 2/3.</text>
</comment>
<comment type="similarity">
    <text evidence="1">Belongs to the rhamnulokinase family.</text>
</comment>
<sequence length="482" mass="53707">MTILNIAAVDLGASSGRVMLASYSTENHKISLEEIHRFKNQFVSQNGHECWDLAYLENEIVNGLRKISNSGRTLHSIGIDTWGVDYVLLDQNGEVVGPTYAYRDHRTDGVMQKVQAELGKEVIYRKTGIQFLTFNTLYQLKAMTDENPAWLSQVKDFVMIPDYLNYRLTGVINREYTNATTTQLVNVNIDSWDTALLDYLGLPASWFGRIRHPGHQVGLWENRVPVMSVASHDTASAVISAPLSDENAAYLCSGTWSLMGLDTTTPCTDECAMNANITNEGGIDGHYRVLKNIMGLWLFNRLCTERDVTDIPALVKQAEAELPFQSLINPNAECFLNPSSMVEAIQQYCREHNQVIPKTTAQLARCIFDSLAMLYRKVALELAGLQGKPISALHIVGGGSQNAFLNQLCADLCGIDVFAGPVEASVLGNVGCQLMALDQIHNAAEFRQLVVKNFPLKQFKKRPHFMPASDFEEKWCEFCALN</sequence>
<gene>
    <name evidence="1" type="primary">rhaB</name>
    <name type="ordered locus">MS2329</name>
</gene>
<accession>Q65Q24</accession>